<protein>
    <recommendedName>
        <fullName>Uncharacterized protein MJ1185</fullName>
    </recommendedName>
</protein>
<proteinExistence type="inferred from homology"/>
<feature type="chain" id="PRO_0000107208" description="Uncharacterized protein MJ1185">
    <location>
        <begin position="1"/>
        <end position="622"/>
    </location>
</feature>
<feature type="binding site" evidence="1">
    <location>
        <position position="302"/>
    </location>
    <ligand>
        <name>[4Fe-4S] cluster</name>
        <dbReference type="ChEBI" id="CHEBI:49883"/>
    </ligand>
</feature>
<feature type="binding site" evidence="1">
    <location>
        <position position="306"/>
    </location>
    <ligand>
        <name>[4Fe-4S] cluster</name>
        <dbReference type="ChEBI" id="CHEBI:49883"/>
    </ligand>
</feature>
<feature type="binding site" evidence="1">
    <location>
        <position position="310"/>
    </location>
    <ligand>
        <name>[4Fe-4S] cluster</name>
        <dbReference type="ChEBI" id="CHEBI:49883"/>
    </ligand>
</feature>
<feature type="binding site" evidence="1">
    <location>
        <position position="521"/>
    </location>
    <ligand>
        <name>[4Fe-4S] cluster</name>
        <dbReference type="ChEBI" id="CHEBI:49883"/>
    </ligand>
</feature>
<comment type="cofactor">
    <cofactor evidence="1">
        <name>[4Fe-4S] cluster</name>
        <dbReference type="ChEBI" id="CHEBI:49883"/>
    </cofactor>
    <text evidence="1">Binds 1 [4Fe-4S] cluster per subunit.</text>
</comment>
<comment type="similarity">
    <text evidence="2">Belongs to the AOR/FOR family.</text>
</comment>
<evidence type="ECO:0000250" key="1">
    <source>
        <dbReference type="UniProtKB" id="Q51739"/>
    </source>
</evidence>
<evidence type="ECO:0000305" key="2"/>
<reference key="1">
    <citation type="journal article" date="1996" name="Science">
        <title>Complete genome sequence of the methanogenic archaeon, Methanococcus jannaschii.</title>
        <authorList>
            <person name="Bult C.J."/>
            <person name="White O."/>
            <person name="Olsen G.J."/>
            <person name="Zhou L."/>
            <person name="Fleischmann R.D."/>
            <person name="Sutton G.G."/>
            <person name="Blake J.A."/>
            <person name="FitzGerald L.M."/>
            <person name="Clayton R.A."/>
            <person name="Gocayne J.D."/>
            <person name="Kerlavage A.R."/>
            <person name="Dougherty B.A."/>
            <person name="Tomb J.-F."/>
            <person name="Adams M.D."/>
            <person name="Reich C.I."/>
            <person name="Overbeek R."/>
            <person name="Kirkness E.F."/>
            <person name="Weinstock K.G."/>
            <person name="Merrick J.M."/>
            <person name="Glodek A."/>
            <person name="Scott J.L."/>
            <person name="Geoghagen N.S.M."/>
            <person name="Weidman J.F."/>
            <person name="Fuhrmann J.L."/>
            <person name="Nguyen D."/>
            <person name="Utterback T.R."/>
            <person name="Kelley J.M."/>
            <person name="Peterson J.D."/>
            <person name="Sadow P.W."/>
            <person name="Hanna M.C."/>
            <person name="Cotton M.D."/>
            <person name="Roberts K.M."/>
            <person name="Hurst M.A."/>
            <person name="Kaine B.P."/>
            <person name="Borodovsky M."/>
            <person name="Klenk H.-P."/>
            <person name="Fraser C.M."/>
            <person name="Smith H.O."/>
            <person name="Woese C.R."/>
            <person name="Venter J.C."/>
        </authorList>
    </citation>
    <scope>NUCLEOTIDE SEQUENCE [LARGE SCALE GENOMIC DNA]</scope>
    <source>
        <strain>ATCC 43067 / DSM 2661 / JAL-1 / JCM 10045 / NBRC 100440</strain>
    </source>
</reference>
<accession>Q58585</accession>
<gene>
    <name type="ordered locus">MJ1185</name>
</gene>
<dbReference type="EMBL" id="L77117">
    <property type="protein sequence ID" value="AAB99186.1"/>
    <property type="molecule type" value="Genomic_DNA"/>
</dbReference>
<dbReference type="PIR" id="H64447">
    <property type="entry name" value="H64447"/>
</dbReference>
<dbReference type="RefSeq" id="WP_010870698.1">
    <property type="nucleotide sequence ID" value="NC_000909.1"/>
</dbReference>
<dbReference type="SMR" id="Q58585"/>
<dbReference type="FunCoup" id="Q58585">
    <property type="interactions" value="158"/>
</dbReference>
<dbReference type="STRING" id="243232.MJ_1185"/>
<dbReference type="PaxDb" id="243232-MJ_1185"/>
<dbReference type="EnsemblBacteria" id="AAB99186">
    <property type="protein sequence ID" value="AAB99186"/>
    <property type="gene ID" value="MJ_1185"/>
</dbReference>
<dbReference type="GeneID" id="1452083"/>
<dbReference type="KEGG" id="mja:MJ_1185"/>
<dbReference type="eggNOG" id="arCOG05072">
    <property type="taxonomic scope" value="Archaea"/>
</dbReference>
<dbReference type="HOGENOM" id="CLU_440510_0_0_2"/>
<dbReference type="InParanoid" id="Q58585"/>
<dbReference type="OrthoDB" id="84495at2157"/>
<dbReference type="PhylomeDB" id="Q58585"/>
<dbReference type="Proteomes" id="UP000000805">
    <property type="component" value="Chromosome"/>
</dbReference>
<dbReference type="GO" id="GO:0051539">
    <property type="term" value="F:4 iron, 4 sulfur cluster binding"/>
    <property type="evidence" value="ECO:0007669"/>
    <property type="project" value="UniProtKB-KW"/>
</dbReference>
<dbReference type="GO" id="GO:0009055">
    <property type="term" value="F:electron transfer activity"/>
    <property type="evidence" value="ECO:0007669"/>
    <property type="project" value="InterPro"/>
</dbReference>
<dbReference type="GO" id="GO:0046872">
    <property type="term" value="F:metal ion binding"/>
    <property type="evidence" value="ECO:0007669"/>
    <property type="project" value="UniProtKB-KW"/>
</dbReference>
<dbReference type="GO" id="GO:0016625">
    <property type="term" value="F:oxidoreductase activity, acting on the aldehyde or oxo group of donors, iron-sulfur protein as acceptor"/>
    <property type="evidence" value="ECO:0007669"/>
    <property type="project" value="InterPro"/>
</dbReference>
<dbReference type="Gene3D" id="1.10.569.10">
    <property type="entry name" value="Aldehyde Ferredoxin Oxidoreductase Protein, subunit A, domain 2"/>
    <property type="match status" value="1"/>
</dbReference>
<dbReference type="Gene3D" id="3.60.9.10">
    <property type="entry name" value="Aldehyde ferredoxin oxidoreductase, N-terminal domain"/>
    <property type="match status" value="1"/>
</dbReference>
<dbReference type="InterPro" id="IPR013984">
    <property type="entry name" value="Ald_Fedxn_OxRdtase_dom2"/>
</dbReference>
<dbReference type="InterPro" id="IPR013983">
    <property type="entry name" value="Ald_Fedxn_OxRdtase_N"/>
</dbReference>
<dbReference type="InterPro" id="IPR036503">
    <property type="entry name" value="Ald_Fedxn_OxRdtase_N_sf"/>
</dbReference>
<dbReference type="InterPro" id="IPR001203">
    <property type="entry name" value="OxRdtase_Ald_Fedxn_C"/>
</dbReference>
<dbReference type="InterPro" id="IPR036021">
    <property type="entry name" value="Tungsten_al_ferr_oxy-like_C"/>
</dbReference>
<dbReference type="InterPro" id="IPR051919">
    <property type="entry name" value="W-dependent_AOR"/>
</dbReference>
<dbReference type="PANTHER" id="PTHR30038">
    <property type="entry name" value="ALDEHYDE FERREDOXIN OXIDOREDUCTASE"/>
    <property type="match status" value="1"/>
</dbReference>
<dbReference type="PANTHER" id="PTHR30038:SF7">
    <property type="entry name" value="TUNGSTEN-CONTAINING GLYCERALDEHYDE-3-PHOSPHATE:FERREDOXIN OXIDOREDUCTASE"/>
    <property type="match status" value="1"/>
</dbReference>
<dbReference type="Pfam" id="PF01314">
    <property type="entry name" value="AFOR_C"/>
    <property type="match status" value="1"/>
</dbReference>
<dbReference type="Pfam" id="PF02730">
    <property type="entry name" value="AFOR_N"/>
    <property type="match status" value="1"/>
</dbReference>
<dbReference type="SMART" id="SM00790">
    <property type="entry name" value="AFOR_N"/>
    <property type="match status" value="1"/>
</dbReference>
<dbReference type="SUPFAM" id="SSF48310">
    <property type="entry name" value="Aldehyde ferredoxin oxidoreductase, C-terminal domains"/>
    <property type="match status" value="1"/>
</dbReference>
<dbReference type="SUPFAM" id="SSF56228">
    <property type="entry name" value="Aldehyde ferredoxin oxidoreductase, N-terminal domain"/>
    <property type="match status" value="1"/>
</dbReference>
<name>Y1185_METJA</name>
<organism>
    <name type="scientific">Methanocaldococcus jannaschii (strain ATCC 43067 / DSM 2661 / JAL-1 / JCM 10045 / NBRC 100440)</name>
    <name type="common">Methanococcus jannaschii</name>
    <dbReference type="NCBI Taxonomy" id="243232"/>
    <lineage>
        <taxon>Archaea</taxon>
        <taxon>Methanobacteriati</taxon>
        <taxon>Methanobacteriota</taxon>
        <taxon>Methanomada group</taxon>
        <taxon>Methanococci</taxon>
        <taxon>Methanococcales</taxon>
        <taxon>Methanocaldococcaceae</taxon>
        <taxon>Methanocaldococcus</taxon>
    </lineage>
</organism>
<keyword id="KW-0004">4Fe-4S</keyword>
<keyword id="KW-0408">Iron</keyword>
<keyword id="KW-0411">Iron-sulfur</keyword>
<keyword id="KW-0479">Metal-binding</keyword>
<keyword id="KW-1185">Reference proteome</keyword>
<sequence>MKNALINATTKKFEIIEKTVLPITWGLYWHNKFETWKYDAYDEKNVFCFGSGVLPVIGGHRLIFSFRSPLWDGFYFSSMGGAGYQFKSTGLNNVAIIGRCENPSILVIENDGQLRIDFIEVKEELKTVYEVSKYILELYKDKNLRSVVVGEAAKRTNMGGLFSQTVRNGKFVEGSEDWAARGGGGSVLYRAHNIMGIVFFGDEKEDKEEKEKAKKIIESYYKKPMSKVVLEHTKKYRYDEETKTGGTFGNNWLLYKEKVPIFNWRMPYIDKEDRKKILEKILKFYLEIFNKETIEPKRWANCGEPCPVLCKKYRNKNKVDYEPYASNGTLLGIFDLYEADRVVKTADALGFDAIEIGNLTAWVFELLDVGLLKEEELNIKKPIFDYKKITNDDDEEIREISKHNAEQAIKFMHNLAENSNDLYKILSLGKRKAAKILNERFKSRVNKIGKKFNDFAVYVPFGDWGEIAPNLYWTPGFFMPFVIQGRYLTYYKPEFNEPEKLAELVVESIKLELPIENLGICRFHRKWLKPVLKELVKELLGIEDIVEDSINLYREICEYNKKIGYPAKIESERVKDLIIAMAKEFGNEEWTKKFENKENVDEYVKRVLNKYSELLGIDWRIS</sequence>